<accession>Q2L8Z6</accession>
<protein>
    <recommendedName>
        <fullName evidence="1">Small ribosomal subunit protein uS2c</fullName>
    </recommendedName>
    <alternativeName>
        <fullName>30S ribosomal protein S2, chloroplastic</fullName>
    </alternativeName>
</protein>
<comment type="subcellular location">
    <subcellularLocation>
        <location>Plastid</location>
        <location>Chloroplast</location>
    </subcellularLocation>
</comment>
<comment type="similarity">
    <text evidence="1">Belongs to the universal ribosomal protein uS2 family.</text>
</comment>
<geneLocation type="chloroplast"/>
<name>RR2_GOSHI</name>
<reference key="1">
    <citation type="journal article" date="2006" name="BMC Genomics">
        <title>The complete chloroplast genome sequence of Gossypium hirsutum: organization and phylogenetic relationships to other angiosperms.</title>
        <authorList>
            <person name="Lee S.-B."/>
            <person name="Kaittanis C."/>
            <person name="Jansen R.K."/>
            <person name="Hostetler J.B."/>
            <person name="Tallon L.J."/>
            <person name="Town C.D."/>
            <person name="Daniell H."/>
        </authorList>
    </citation>
    <scope>NUCLEOTIDE SEQUENCE [LARGE SCALE GENOMIC DNA]</scope>
    <source>
        <strain>cv. Coker 310FR</strain>
    </source>
</reference>
<feature type="chain" id="PRO_0000352116" description="Small ribosomal subunit protein uS2c">
    <location>
        <begin position="1"/>
        <end position="236"/>
    </location>
</feature>
<dbReference type="EMBL" id="DQ345959">
    <property type="protein sequence ID" value="ABC73617.1"/>
    <property type="molecule type" value="Genomic_DNA"/>
</dbReference>
<dbReference type="RefSeq" id="YP_538924.1">
    <property type="nucleotide sequence ID" value="NC_007944.1"/>
</dbReference>
<dbReference type="SMR" id="Q2L8Z6"/>
<dbReference type="GeneID" id="3989194"/>
<dbReference type="KEGG" id="ghi:3989194"/>
<dbReference type="OrthoDB" id="8030at41938"/>
<dbReference type="Proteomes" id="UP000189702">
    <property type="component" value="Chloroplast Pltd"/>
</dbReference>
<dbReference type="GO" id="GO:0009507">
    <property type="term" value="C:chloroplast"/>
    <property type="evidence" value="ECO:0007669"/>
    <property type="project" value="UniProtKB-SubCell"/>
</dbReference>
<dbReference type="GO" id="GO:0005763">
    <property type="term" value="C:mitochondrial small ribosomal subunit"/>
    <property type="evidence" value="ECO:0000318"/>
    <property type="project" value="GO_Central"/>
</dbReference>
<dbReference type="GO" id="GO:0003735">
    <property type="term" value="F:structural constituent of ribosome"/>
    <property type="evidence" value="ECO:0000318"/>
    <property type="project" value="GO_Central"/>
</dbReference>
<dbReference type="GO" id="GO:0006412">
    <property type="term" value="P:translation"/>
    <property type="evidence" value="ECO:0007669"/>
    <property type="project" value="UniProtKB-UniRule"/>
</dbReference>
<dbReference type="CDD" id="cd01425">
    <property type="entry name" value="RPS2"/>
    <property type="match status" value="1"/>
</dbReference>
<dbReference type="FunFam" id="3.40.50.10490:FF:000101">
    <property type="match status" value="1"/>
</dbReference>
<dbReference type="FunFam" id="1.10.287.610:FF:000001">
    <property type="entry name" value="30S ribosomal protein S2"/>
    <property type="match status" value="1"/>
</dbReference>
<dbReference type="Gene3D" id="3.40.50.10490">
    <property type="entry name" value="Glucose-6-phosphate isomerase like protein, domain 1"/>
    <property type="match status" value="1"/>
</dbReference>
<dbReference type="Gene3D" id="1.10.287.610">
    <property type="entry name" value="Helix hairpin bin"/>
    <property type="match status" value="1"/>
</dbReference>
<dbReference type="HAMAP" id="MF_00291_B">
    <property type="entry name" value="Ribosomal_uS2_B"/>
    <property type="match status" value="1"/>
</dbReference>
<dbReference type="InterPro" id="IPR001865">
    <property type="entry name" value="Ribosomal_uS2"/>
</dbReference>
<dbReference type="InterPro" id="IPR005706">
    <property type="entry name" value="Ribosomal_uS2_bac/mit/plastid"/>
</dbReference>
<dbReference type="InterPro" id="IPR018130">
    <property type="entry name" value="Ribosomal_uS2_CS"/>
</dbReference>
<dbReference type="InterPro" id="IPR023591">
    <property type="entry name" value="Ribosomal_uS2_flav_dom_sf"/>
</dbReference>
<dbReference type="NCBIfam" id="TIGR01011">
    <property type="entry name" value="rpsB_bact"/>
    <property type="match status" value="1"/>
</dbReference>
<dbReference type="PANTHER" id="PTHR12534">
    <property type="entry name" value="30S RIBOSOMAL PROTEIN S2 PROKARYOTIC AND ORGANELLAR"/>
    <property type="match status" value="1"/>
</dbReference>
<dbReference type="PANTHER" id="PTHR12534:SF0">
    <property type="entry name" value="SMALL RIBOSOMAL SUBUNIT PROTEIN US2M"/>
    <property type="match status" value="1"/>
</dbReference>
<dbReference type="Pfam" id="PF00318">
    <property type="entry name" value="Ribosomal_S2"/>
    <property type="match status" value="1"/>
</dbReference>
<dbReference type="PRINTS" id="PR00395">
    <property type="entry name" value="RIBOSOMALS2"/>
</dbReference>
<dbReference type="SUPFAM" id="SSF52313">
    <property type="entry name" value="Ribosomal protein S2"/>
    <property type="match status" value="1"/>
</dbReference>
<dbReference type="PROSITE" id="PS00962">
    <property type="entry name" value="RIBOSOMAL_S2_1"/>
    <property type="match status" value="1"/>
</dbReference>
<dbReference type="PROSITE" id="PS00963">
    <property type="entry name" value="RIBOSOMAL_S2_2"/>
    <property type="match status" value="1"/>
</dbReference>
<gene>
    <name type="primary">rps2</name>
</gene>
<proteinExistence type="inferred from homology"/>
<organism>
    <name type="scientific">Gossypium hirsutum</name>
    <name type="common">Upland cotton</name>
    <name type="synonym">Gossypium mexicanum</name>
    <dbReference type="NCBI Taxonomy" id="3635"/>
    <lineage>
        <taxon>Eukaryota</taxon>
        <taxon>Viridiplantae</taxon>
        <taxon>Streptophyta</taxon>
        <taxon>Embryophyta</taxon>
        <taxon>Tracheophyta</taxon>
        <taxon>Spermatophyta</taxon>
        <taxon>Magnoliopsida</taxon>
        <taxon>eudicotyledons</taxon>
        <taxon>Gunneridae</taxon>
        <taxon>Pentapetalae</taxon>
        <taxon>rosids</taxon>
        <taxon>malvids</taxon>
        <taxon>Malvales</taxon>
        <taxon>Malvaceae</taxon>
        <taxon>Malvoideae</taxon>
        <taxon>Gossypium</taxon>
    </lineage>
</organism>
<sequence>MARRYWNINLEEMLEAGVHFGHGTRKWNPRMAPYISAKRKGIHITNLTRTARFLSEACDLVFDAASKGKQFLIVGTKNKAADSVARAAIRARCHYVNKKWLGGMLTNWPTTETRLHKFRDLRTEQKTGGLNRLPKRDAAMLKRQLSRLQTYLGGIKYMTRLPDIVIIVDQQEEYTALRECITLGIPTICLIDTNSDPDLADISIPANDDAIASIRLILNKLVVAICEGRSSYIRNP</sequence>
<evidence type="ECO:0000305" key="1"/>
<keyword id="KW-0150">Chloroplast</keyword>
<keyword id="KW-0934">Plastid</keyword>
<keyword id="KW-1185">Reference proteome</keyword>
<keyword id="KW-0687">Ribonucleoprotein</keyword>
<keyword id="KW-0689">Ribosomal protein</keyword>